<reference key="1">
    <citation type="journal article" date="2008" name="J. Bacteriol.">
        <title>The pangenome structure of Escherichia coli: comparative genomic analysis of E. coli commensal and pathogenic isolates.</title>
        <authorList>
            <person name="Rasko D.A."/>
            <person name="Rosovitz M.J."/>
            <person name="Myers G.S.A."/>
            <person name="Mongodin E.F."/>
            <person name="Fricke W.F."/>
            <person name="Gajer P."/>
            <person name="Crabtree J."/>
            <person name="Sebaihia M."/>
            <person name="Thomson N.R."/>
            <person name="Chaudhuri R."/>
            <person name="Henderson I.R."/>
            <person name="Sperandio V."/>
            <person name="Ravel J."/>
        </authorList>
    </citation>
    <scope>NUCLEOTIDE SEQUENCE [LARGE SCALE GENOMIC DNA]</scope>
    <source>
        <strain>E24377A / ETEC</strain>
    </source>
</reference>
<proteinExistence type="inferred from homology"/>
<dbReference type="EMBL" id="CP000800">
    <property type="protein sequence ID" value="ABV16626.1"/>
    <property type="molecule type" value="Genomic_DNA"/>
</dbReference>
<dbReference type="RefSeq" id="WP_000107723.1">
    <property type="nucleotide sequence ID" value="NC_009801.1"/>
</dbReference>
<dbReference type="SMR" id="A7ZS06"/>
<dbReference type="GeneID" id="93778869"/>
<dbReference type="KEGG" id="ecw:EcE24377A_3590"/>
<dbReference type="HOGENOM" id="CLU_052043_1_1_6"/>
<dbReference type="Proteomes" id="UP000001122">
    <property type="component" value="Chromosome"/>
</dbReference>
<dbReference type="GO" id="GO:0005886">
    <property type="term" value="C:plasma membrane"/>
    <property type="evidence" value="ECO:0007669"/>
    <property type="project" value="UniProtKB-SubCell"/>
</dbReference>
<dbReference type="GO" id="GO:0015194">
    <property type="term" value="F:L-serine transmembrane transporter activity"/>
    <property type="evidence" value="ECO:0007669"/>
    <property type="project" value="InterPro"/>
</dbReference>
<dbReference type="GO" id="GO:0015293">
    <property type="term" value="F:symporter activity"/>
    <property type="evidence" value="ECO:0007669"/>
    <property type="project" value="UniProtKB-UniRule"/>
</dbReference>
<dbReference type="GO" id="GO:0015565">
    <property type="term" value="F:threonine efflux transmembrane transporter activity"/>
    <property type="evidence" value="ECO:0007669"/>
    <property type="project" value="InterPro"/>
</dbReference>
<dbReference type="HAMAP" id="MF_01583">
    <property type="entry name" value="Thr_Ser_transp_TdcC"/>
    <property type="match status" value="1"/>
</dbReference>
<dbReference type="InterPro" id="IPR018227">
    <property type="entry name" value="Amino_acid_transport_2"/>
</dbReference>
<dbReference type="InterPro" id="IPR004694">
    <property type="entry name" value="Hydroxy_aa_transpt"/>
</dbReference>
<dbReference type="InterPro" id="IPR023726">
    <property type="entry name" value="Thr/Ser_transpt_TdcC"/>
</dbReference>
<dbReference type="NCBIfam" id="NF010152">
    <property type="entry name" value="PRK13629.1"/>
    <property type="match status" value="1"/>
</dbReference>
<dbReference type="NCBIfam" id="TIGR00814">
    <property type="entry name" value="stp"/>
    <property type="match status" value="1"/>
</dbReference>
<dbReference type="PANTHER" id="PTHR35334">
    <property type="entry name" value="SERINE TRANSPORTER"/>
    <property type="match status" value="1"/>
</dbReference>
<dbReference type="PANTHER" id="PTHR35334:SF1">
    <property type="entry name" value="THREONINE_SERINE TRANSPORTER TDCC"/>
    <property type="match status" value="1"/>
</dbReference>
<dbReference type="Pfam" id="PF03222">
    <property type="entry name" value="Trp_Tyr_perm"/>
    <property type="match status" value="1"/>
</dbReference>
<name>TDCC_ECO24</name>
<protein>
    <recommendedName>
        <fullName evidence="1">Threonine/serine transporter TdcC</fullName>
    </recommendedName>
    <alternativeName>
        <fullName evidence="1">H(+)/threonine-serine symporter</fullName>
    </alternativeName>
</protein>
<organism>
    <name type="scientific">Escherichia coli O139:H28 (strain E24377A / ETEC)</name>
    <dbReference type="NCBI Taxonomy" id="331111"/>
    <lineage>
        <taxon>Bacteria</taxon>
        <taxon>Pseudomonadati</taxon>
        <taxon>Pseudomonadota</taxon>
        <taxon>Gammaproteobacteria</taxon>
        <taxon>Enterobacterales</taxon>
        <taxon>Enterobacteriaceae</taxon>
        <taxon>Escherichia</taxon>
    </lineage>
</organism>
<comment type="function">
    <text evidence="1">Involved in the import of threonine and serine into the cell, with the concomitant import of a proton (symport system).</text>
</comment>
<comment type="catalytic activity">
    <reaction evidence="1">
        <text>L-threonine(in) + H(+)(in) = L-threonine(out) + H(+)(out)</text>
        <dbReference type="Rhea" id="RHEA:28883"/>
        <dbReference type="ChEBI" id="CHEBI:15378"/>
        <dbReference type="ChEBI" id="CHEBI:57926"/>
    </reaction>
    <physiologicalReaction direction="right-to-left" evidence="1">
        <dbReference type="Rhea" id="RHEA:28885"/>
    </physiologicalReaction>
</comment>
<comment type="catalytic activity">
    <reaction evidence="1">
        <text>L-serine(in) + H(+)(in) = L-serine(out) + H(+)(out)</text>
        <dbReference type="Rhea" id="RHEA:28887"/>
        <dbReference type="ChEBI" id="CHEBI:15378"/>
        <dbReference type="ChEBI" id="CHEBI:33384"/>
    </reaction>
    <physiologicalReaction direction="right-to-left" evidence="1">
        <dbReference type="Rhea" id="RHEA:28889"/>
    </physiologicalReaction>
</comment>
<comment type="subcellular location">
    <subcellularLocation>
        <location evidence="1">Cell inner membrane</location>
        <topology evidence="1">Multi-pass membrane protein</topology>
    </subcellularLocation>
</comment>
<comment type="similarity">
    <text evidence="1">Belongs to the amino acid/polyamine transporter 2 family. SdaC/TdcC subfamily.</text>
</comment>
<keyword id="KW-0029">Amino-acid transport</keyword>
<keyword id="KW-0997">Cell inner membrane</keyword>
<keyword id="KW-1003">Cell membrane</keyword>
<keyword id="KW-0472">Membrane</keyword>
<keyword id="KW-1185">Reference proteome</keyword>
<keyword id="KW-0769">Symport</keyword>
<keyword id="KW-0812">Transmembrane</keyword>
<keyword id="KW-1133">Transmembrane helix</keyword>
<keyword id="KW-0813">Transport</keyword>
<accession>A7ZS06</accession>
<feature type="chain" id="PRO_1000069289" description="Threonine/serine transporter TdcC">
    <location>
        <begin position="1"/>
        <end position="443"/>
    </location>
</feature>
<feature type="transmembrane region" description="Helical" evidence="1">
    <location>
        <begin position="22"/>
        <end position="42"/>
    </location>
</feature>
<feature type="transmembrane region" description="Helical" evidence="1">
    <location>
        <begin position="44"/>
        <end position="64"/>
    </location>
</feature>
<feature type="transmembrane region" description="Helical" evidence="1">
    <location>
        <begin position="97"/>
        <end position="117"/>
    </location>
</feature>
<feature type="transmembrane region" description="Helical" evidence="1">
    <location>
        <begin position="140"/>
        <end position="160"/>
    </location>
</feature>
<feature type="transmembrane region" description="Helical" evidence="1">
    <location>
        <begin position="163"/>
        <end position="183"/>
    </location>
</feature>
<feature type="transmembrane region" description="Helical" evidence="1">
    <location>
        <begin position="207"/>
        <end position="227"/>
    </location>
</feature>
<feature type="transmembrane region" description="Helical" evidence="1">
    <location>
        <begin position="261"/>
        <end position="281"/>
    </location>
</feature>
<feature type="transmembrane region" description="Helical" evidence="1">
    <location>
        <begin position="311"/>
        <end position="331"/>
    </location>
</feature>
<feature type="transmembrane region" description="Helical" evidence="1">
    <location>
        <begin position="366"/>
        <end position="386"/>
    </location>
</feature>
<feature type="transmembrane region" description="Helical" evidence="1">
    <location>
        <begin position="389"/>
        <end position="409"/>
    </location>
</feature>
<feature type="transmembrane region" description="Helical" evidence="1">
    <location>
        <begin position="423"/>
        <end position="443"/>
    </location>
</feature>
<gene>
    <name evidence="1" type="primary">tdcC</name>
    <name type="ordered locus">EcE24377A_3590</name>
</gene>
<evidence type="ECO:0000255" key="1">
    <source>
        <dbReference type="HAMAP-Rule" id="MF_01583"/>
    </source>
</evidence>
<sequence>MSTSDSIVSSQTKQSSWRKSDTTWTLGLFGTAIGAGVLFFPIRAGFGGLIPILLMLVLAYPIAFYCHRALARLCLSGSNPSGNITETVEEHFGKTGGVVITFLYFFAICPLLWIYGVTITNTFMTFWENQLGFAPLNRGFVALFLLLLMAFVIWFGKDLMVKVMSYLVWPFIASLVLISLSLIPYWNSAVIDQVDLGSLSLTGHDGILITVWLGISIMVFSFNFSPIVSSFVVSKREEYEKDFGRDFTERKCSQIISRASMLMVAVVMFFAFSCLFTLSPANMAEAKAQNIPVLSYLANHFASMTGTKTTFAITLEYAASIIALVAIFKSFFGHYLGTLEGLNGLVLKFGYKGDKTKVSLGKLNTISMIFIMGSTWVVAYANPNILDLIEAMGAPIIASLLCLLPMYAIRKAPSLAKYRGRLDNVFVTVIGLLTILNIVYKLF</sequence>